<reference key="1">
    <citation type="journal article" date="2002" name="Science">
        <title>50 million years of genomic stasis in endosymbiotic bacteria.</title>
        <authorList>
            <person name="Tamas I."/>
            <person name="Klasson L."/>
            <person name="Canbaeck B."/>
            <person name="Naeslund A.K."/>
            <person name="Eriksson A.-S."/>
            <person name="Wernegreen J.J."/>
            <person name="Sandstroem J.P."/>
            <person name="Moran N.A."/>
            <person name="Andersson S.G.E."/>
        </authorList>
    </citation>
    <scope>NUCLEOTIDE SEQUENCE [LARGE SCALE GENOMIC DNA]</scope>
    <source>
        <strain>Sg</strain>
    </source>
</reference>
<reference key="2">
    <citation type="journal article" date="1998" name="Curr. Microbiol.">
        <title>Sequence analysis of a DNA fragment from Buchnera aphidicola (Aphid endosymbiont) containing the genes dapD-htrA-ilvI-ilvH-ftsL-ftsI-murE.</title>
        <authorList>
            <person name="Thao M.L."/>
            <person name="Baumann P."/>
        </authorList>
    </citation>
    <scope>NUCLEOTIDE SEQUENCE [GENOMIC DNA] OF 1-292</scope>
</reference>
<reference key="3">
    <citation type="journal article" date="2008" name="Proc. Natl. Acad. Sci. U.S.A.">
        <title>Endosymbiont gene functions impaired and rescued by polymerase infidelity at poly(A) tracts.</title>
        <authorList>
            <person name="Tamas I."/>
            <person name="Wernegreen J.J."/>
            <person name="Nystedt B."/>
            <person name="Kauppinen S.N."/>
            <person name="Darby A.C."/>
            <person name="Gomez-Valero L."/>
            <person name="Lundin D."/>
            <person name="Poole A.M."/>
            <person name="Andersson S.G."/>
        </authorList>
    </citation>
    <scope>TRANSCRIPTIONAL SLIPPAGE</scope>
</reference>
<gene>
    <name evidence="1" type="primary">murE</name>
    <name type="ordered locus">BUsg_215</name>
</gene>
<evidence type="ECO:0000255" key="1">
    <source>
        <dbReference type="HAMAP-Rule" id="MF_00208"/>
    </source>
</evidence>
<evidence type="ECO:0000305" key="2"/>
<evidence type="ECO:0000305" key="3">
    <source>
    </source>
</evidence>
<accession>O85298</accession>
<comment type="function">
    <text evidence="1">Catalyzes the addition of meso-diaminopimelic acid to the nucleotide precursor UDP-N-acetylmuramoyl-L-alanyl-D-glutamate (UMAG) in the biosynthesis of bacterial cell-wall peptidoglycan.</text>
</comment>
<comment type="catalytic activity">
    <reaction evidence="1">
        <text>UDP-N-acetyl-alpha-D-muramoyl-L-alanyl-D-glutamate + meso-2,6-diaminopimelate + ATP = UDP-N-acetyl-alpha-D-muramoyl-L-alanyl-gamma-D-glutamyl-meso-2,6-diaminopimelate + ADP + phosphate + H(+)</text>
        <dbReference type="Rhea" id="RHEA:23676"/>
        <dbReference type="ChEBI" id="CHEBI:15378"/>
        <dbReference type="ChEBI" id="CHEBI:30616"/>
        <dbReference type="ChEBI" id="CHEBI:43474"/>
        <dbReference type="ChEBI" id="CHEBI:57791"/>
        <dbReference type="ChEBI" id="CHEBI:83900"/>
        <dbReference type="ChEBI" id="CHEBI:83905"/>
        <dbReference type="ChEBI" id="CHEBI:456216"/>
        <dbReference type="EC" id="6.3.2.13"/>
    </reaction>
</comment>
<comment type="cofactor">
    <cofactor evidence="1">
        <name>Mg(2+)</name>
        <dbReference type="ChEBI" id="CHEBI:18420"/>
    </cofactor>
</comment>
<comment type="pathway">
    <text evidence="1">Cell wall biogenesis; peptidoglycan biosynthesis.</text>
</comment>
<comment type="subcellular location">
    <subcellularLocation>
        <location evidence="1">Cytoplasm</location>
    </subcellularLocation>
</comment>
<comment type="PTM">
    <text evidence="1">Carboxylation is probably crucial for Mg(2+) binding and, consequently, for the gamma-phosphate positioning of ATP.</text>
</comment>
<comment type="similarity">
    <text evidence="1">Belongs to the MurCDEF family. MurE subfamily.</text>
</comment>
<comment type="caution">
    <text evidence="3">The gene is frameshifted. However, transcriptional slippage at poly(A) may correct the reading frame, which can potentially yield full-length protein.</text>
</comment>
<comment type="sequence caution" evidence="2">
    <conflict type="frameshift">
        <sequence resource="EMBL" id="AE013218"/>
    </conflict>
</comment>
<organism>
    <name type="scientific">Buchnera aphidicola subsp. Schizaphis graminum (strain Sg)</name>
    <dbReference type="NCBI Taxonomy" id="198804"/>
    <lineage>
        <taxon>Bacteria</taxon>
        <taxon>Pseudomonadati</taxon>
        <taxon>Pseudomonadota</taxon>
        <taxon>Gammaproteobacteria</taxon>
        <taxon>Enterobacterales</taxon>
        <taxon>Erwiniaceae</taxon>
        <taxon>Buchnera</taxon>
    </lineage>
</organism>
<sequence>MKKNNLKYILFPWIKNTPQKKFSNLSLDSRKLTSKDVFIAIKGTKKDGNDFIFEAVKKRVVAILSETKEKKKHGEINYINNIPILSFFKLSEKISNLAARVYKEPAKTLKIIGVTGTNGKTTVTQLINQWSELLGKKIATMGTLGNGFYNALKTTKNTTSSAIDIQSFLHIAAKKKINLVTMEVSSHGLVQNRVKNIPFYIGIFTNLTQDHLDYHKNMKQYESAKWSFFSQHKIKKIILNANDKYAKKWLRKLSDKYTIAVTIQNEKQKKYSTKWINATGIKYNVNSTDVEFESSWGQGILSTCLIGYFNIQNLLLSFASMLEMNYKLSDLINTSIQLQPILGRMQKFDVFGKPKVIIDYAHTPDALKKALNAIKSYYKKKIWCIFGCGGERDQTKRPLMGSISEKIADRVIITNDNPRNENQNKIIKEIVQGCIKKEKIIIIPNREKAISSTFFKANIDDIIFISGKGHENQQIIKNKIINYSDQKVVIKLLEKKI</sequence>
<proteinExistence type="inferred from homology"/>
<dbReference type="EC" id="6.3.2.13" evidence="1"/>
<dbReference type="EMBL" id="AE013218">
    <property type="status" value="NOT_ANNOTATED_CDS"/>
    <property type="molecule type" value="Genomic_DNA"/>
</dbReference>
<dbReference type="EMBL" id="AF060492">
    <property type="protein sequence ID" value="AAC32338.1"/>
    <property type="molecule type" value="Genomic_DNA"/>
</dbReference>
<dbReference type="SMR" id="O85298"/>
<dbReference type="UniPathway" id="UPA00219"/>
<dbReference type="Proteomes" id="UP000000416">
    <property type="component" value="Chromosome"/>
</dbReference>
<dbReference type="GO" id="GO:0005737">
    <property type="term" value="C:cytoplasm"/>
    <property type="evidence" value="ECO:0007669"/>
    <property type="project" value="UniProtKB-SubCell"/>
</dbReference>
<dbReference type="GO" id="GO:0005524">
    <property type="term" value="F:ATP binding"/>
    <property type="evidence" value="ECO:0007669"/>
    <property type="project" value="UniProtKB-UniRule"/>
</dbReference>
<dbReference type="GO" id="GO:0000287">
    <property type="term" value="F:magnesium ion binding"/>
    <property type="evidence" value="ECO:0007669"/>
    <property type="project" value="UniProtKB-UniRule"/>
</dbReference>
<dbReference type="GO" id="GO:0008765">
    <property type="term" value="F:UDP-N-acetylmuramoylalanyl-D-glutamate-2,6-diaminopimelate ligase activity"/>
    <property type="evidence" value="ECO:0007669"/>
    <property type="project" value="UniProtKB-UniRule"/>
</dbReference>
<dbReference type="GO" id="GO:0051301">
    <property type="term" value="P:cell division"/>
    <property type="evidence" value="ECO:0007669"/>
    <property type="project" value="UniProtKB-KW"/>
</dbReference>
<dbReference type="GO" id="GO:0071555">
    <property type="term" value="P:cell wall organization"/>
    <property type="evidence" value="ECO:0007669"/>
    <property type="project" value="UniProtKB-KW"/>
</dbReference>
<dbReference type="GO" id="GO:0009252">
    <property type="term" value="P:peptidoglycan biosynthetic process"/>
    <property type="evidence" value="ECO:0007669"/>
    <property type="project" value="UniProtKB-UniRule"/>
</dbReference>
<dbReference type="GO" id="GO:0008360">
    <property type="term" value="P:regulation of cell shape"/>
    <property type="evidence" value="ECO:0007669"/>
    <property type="project" value="UniProtKB-KW"/>
</dbReference>
<dbReference type="Gene3D" id="3.90.190.20">
    <property type="entry name" value="Mur ligase, C-terminal domain"/>
    <property type="match status" value="1"/>
</dbReference>
<dbReference type="Gene3D" id="3.40.1190.10">
    <property type="entry name" value="Mur-like, catalytic domain"/>
    <property type="match status" value="1"/>
</dbReference>
<dbReference type="Gene3D" id="3.40.1390.10">
    <property type="entry name" value="MurE/MurF, N-terminal domain"/>
    <property type="match status" value="1"/>
</dbReference>
<dbReference type="HAMAP" id="MF_00208">
    <property type="entry name" value="MurE"/>
    <property type="match status" value="1"/>
</dbReference>
<dbReference type="InterPro" id="IPR036565">
    <property type="entry name" value="Mur-like_cat_sf"/>
</dbReference>
<dbReference type="InterPro" id="IPR004101">
    <property type="entry name" value="Mur_ligase_C"/>
</dbReference>
<dbReference type="InterPro" id="IPR036615">
    <property type="entry name" value="Mur_ligase_C_dom_sf"/>
</dbReference>
<dbReference type="InterPro" id="IPR013221">
    <property type="entry name" value="Mur_ligase_cen"/>
</dbReference>
<dbReference type="InterPro" id="IPR000713">
    <property type="entry name" value="Mur_ligase_N"/>
</dbReference>
<dbReference type="InterPro" id="IPR035911">
    <property type="entry name" value="MurE/MurF_N"/>
</dbReference>
<dbReference type="InterPro" id="IPR005761">
    <property type="entry name" value="UDP-N-AcMur-Glu-dNH2Pim_ligase"/>
</dbReference>
<dbReference type="NCBIfam" id="TIGR01085">
    <property type="entry name" value="murE"/>
    <property type="match status" value="1"/>
</dbReference>
<dbReference type="NCBIfam" id="NF001123">
    <property type="entry name" value="PRK00139.1-1"/>
    <property type="match status" value="1"/>
</dbReference>
<dbReference type="NCBIfam" id="NF001126">
    <property type="entry name" value="PRK00139.1-4"/>
    <property type="match status" value="1"/>
</dbReference>
<dbReference type="PANTHER" id="PTHR23135">
    <property type="entry name" value="MUR LIGASE FAMILY MEMBER"/>
    <property type="match status" value="1"/>
</dbReference>
<dbReference type="PANTHER" id="PTHR23135:SF4">
    <property type="entry name" value="UDP-N-ACETYLMURAMOYL-L-ALANYL-D-GLUTAMATE--2,6-DIAMINOPIMELATE LIGASE MURE HOMOLOG, CHLOROPLASTIC"/>
    <property type="match status" value="1"/>
</dbReference>
<dbReference type="Pfam" id="PF01225">
    <property type="entry name" value="Mur_ligase"/>
    <property type="match status" value="1"/>
</dbReference>
<dbReference type="Pfam" id="PF02875">
    <property type="entry name" value="Mur_ligase_C"/>
    <property type="match status" value="1"/>
</dbReference>
<dbReference type="Pfam" id="PF08245">
    <property type="entry name" value="Mur_ligase_M"/>
    <property type="match status" value="1"/>
</dbReference>
<dbReference type="SUPFAM" id="SSF53623">
    <property type="entry name" value="MurD-like peptide ligases, catalytic domain"/>
    <property type="match status" value="1"/>
</dbReference>
<dbReference type="SUPFAM" id="SSF53244">
    <property type="entry name" value="MurD-like peptide ligases, peptide-binding domain"/>
    <property type="match status" value="1"/>
</dbReference>
<dbReference type="SUPFAM" id="SSF63418">
    <property type="entry name" value="MurE/MurF N-terminal domain"/>
    <property type="match status" value="1"/>
</dbReference>
<protein>
    <recommendedName>
        <fullName evidence="1">UDP-N-acetylmuramoyl-L-alanyl-D-glutamate--2,6-diaminopimelate ligase</fullName>
        <ecNumber evidence="1">6.3.2.13</ecNumber>
    </recommendedName>
    <alternativeName>
        <fullName evidence="1">Meso-A2pm-adding enzyme</fullName>
    </alternativeName>
    <alternativeName>
        <fullName evidence="1">Meso-diaminopimelate-adding enzyme</fullName>
    </alternativeName>
    <alternativeName>
        <fullName evidence="1">UDP-MurNAc-L-Ala-D-Glu:meso-diaminopimelate ligase</fullName>
    </alternativeName>
    <alternativeName>
        <fullName evidence="1">UDP-MurNAc-tripeptide synthetase</fullName>
    </alternativeName>
    <alternativeName>
        <fullName evidence="1">UDP-N-acetylmuramyl-tripeptide synthetase</fullName>
    </alternativeName>
</protein>
<name>MURE_BUCAP</name>
<keyword id="KW-0067">ATP-binding</keyword>
<keyword id="KW-0131">Cell cycle</keyword>
<keyword id="KW-0132">Cell division</keyword>
<keyword id="KW-0133">Cell shape</keyword>
<keyword id="KW-0961">Cell wall biogenesis/degradation</keyword>
<keyword id="KW-0963">Cytoplasm</keyword>
<keyword id="KW-0436">Ligase</keyword>
<keyword id="KW-0460">Magnesium</keyword>
<keyword id="KW-0547">Nucleotide-binding</keyword>
<keyword id="KW-0573">Peptidoglycan synthesis</keyword>
<feature type="chain" id="PRO_0000101874" description="UDP-N-acetylmuramoyl-L-alanyl-D-glutamate--2,6-diaminopimelate ligase">
    <location>
        <begin position="1"/>
        <end position="497"/>
    </location>
</feature>
<feature type="short sequence motif" description="Meso-diaminopimelate recognition motif" evidence="1">
    <location>
        <begin position="416"/>
        <end position="419"/>
    </location>
</feature>
<feature type="binding site" evidence="1">
    <location>
        <position position="27"/>
    </location>
    <ligand>
        <name>UDP-N-acetyl-alpha-D-muramoyl-L-alanyl-D-glutamate</name>
        <dbReference type="ChEBI" id="CHEBI:83900"/>
    </ligand>
</feature>
<feature type="binding site" evidence="1">
    <location>
        <position position="29"/>
    </location>
    <ligand>
        <name>UDP-N-acetyl-alpha-D-muramoyl-L-alanyl-D-glutamate</name>
        <dbReference type="ChEBI" id="CHEBI:83900"/>
    </ligand>
</feature>
<feature type="binding site" evidence="1">
    <location>
        <begin position="116"/>
        <end position="122"/>
    </location>
    <ligand>
        <name>ATP</name>
        <dbReference type="ChEBI" id="CHEBI:30616"/>
    </ligand>
</feature>
<feature type="binding site" evidence="1">
    <location>
        <position position="157"/>
    </location>
    <ligand>
        <name>UDP-N-acetyl-alpha-D-muramoyl-L-alanyl-D-glutamate</name>
        <dbReference type="ChEBI" id="CHEBI:83900"/>
    </ligand>
</feature>
<feature type="binding site" evidence="1">
    <location>
        <begin position="158"/>
        <end position="159"/>
    </location>
    <ligand>
        <name>UDP-N-acetyl-alpha-D-muramoyl-L-alanyl-D-glutamate</name>
        <dbReference type="ChEBI" id="CHEBI:83900"/>
    </ligand>
</feature>
<feature type="binding site" evidence="1">
    <location>
        <position position="185"/>
    </location>
    <ligand>
        <name>UDP-N-acetyl-alpha-D-muramoyl-L-alanyl-D-glutamate</name>
        <dbReference type="ChEBI" id="CHEBI:83900"/>
    </ligand>
</feature>
<feature type="binding site" evidence="1">
    <location>
        <position position="191"/>
    </location>
    <ligand>
        <name>UDP-N-acetyl-alpha-D-muramoyl-L-alanyl-D-glutamate</name>
        <dbReference type="ChEBI" id="CHEBI:83900"/>
    </ligand>
</feature>
<feature type="binding site" evidence="1">
    <location>
        <position position="193"/>
    </location>
    <ligand>
        <name>UDP-N-acetyl-alpha-D-muramoyl-L-alanyl-D-glutamate</name>
        <dbReference type="ChEBI" id="CHEBI:83900"/>
    </ligand>
</feature>
<feature type="binding site" evidence="1">
    <location>
        <position position="392"/>
    </location>
    <ligand>
        <name>meso-2,6-diaminopimelate</name>
        <dbReference type="ChEBI" id="CHEBI:57791"/>
    </ligand>
</feature>
<feature type="binding site" evidence="1">
    <location>
        <begin position="416"/>
        <end position="419"/>
    </location>
    <ligand>
        <name>meso-2,6-diaminopimelate</name>
        <dbReference type="ChEBI" id="CHEBI:57791"/>
    </ligand>
</feature>
<feature type="binding site" evidence="1">
    <location>
        <position position="467"/>
    </location>
    <ligand>
        <name>meso-2,6-diaminopimelate</name>
        <dbReference type="ChEBI" id="CHEBI:57791"/>
    </ligand>
</feature>
<feature type="binding site" evidence="1">
    <location>
        <position position="471"/>
    </location>
    <ligand>
        <name>meso-2,6-diaminopimelate</name>
        <dbReference type="ChEBI" id="CHEBI:57791"/>
    </ligand>
</feature>
<feature type="modified residue" description="N6-carboxylysine" evidence="1">
    <location>
        <position position="225"/>
    </location>
</feature>